<evidence type="ECO:0000250" key="1"/>
<evidence type="ECO:0000250" key="2">
    <source>
        <dbReference type="UniProtKB" id="P62277"/>
    </source>
</evidence>
<evidence type="ECO:0000256" key="3">
    <source>
        <dbReference type="SAM" id="MobiDB-lite"/>
    </source>
</evidence>
<evidence type="ECO:0000305" key="4"/>
<protein>
    <recommendedName>
        <fullName evidence="4">Small ribosomal subunit protein uS15</fullName>
    </recommendedName>
    <alternativeName>
        <fullName>40S ribosomal protein S13</fullName>
    </alternativeName>
</protein>
<feature type="initiator methionine" description="Removed" evidence="1">
    <location>
        <position position="1"/>
    </location>
</feature>
<feature type="chain" id="PRO_0000319548" description="Small ribosomal subunit protein uS15">
    <location>
        <begin position="2"/>
        <end position="151"/>
    </location>
</feature>
<feature type="region of interest" description="Disordered" evidence="3">
    <location>
        <begin position="1"/>
        <end position="20"/>
    </location>
</feature>
<gene>
    <name type="primary">rps13</name>
    <name type="ORF">DDB_G0284533</name>
</gene>
<reference key="1">
    <citation type="journal article" date="2005" name="Nature">
        <title>The genome of the social amoeba Dictyostelium discoideum.</title>
        <authorList>
            <person name="Eichinger L."/>
            <person name="Pachebat J.A."/>
            <person name="Gloeckner G."/>
            <person name="Rajandream M.A."/>
            <person name="Sucgang R."/>
            <person name="Berriman M."/>
            <person name="Song J."/>
            <person name="Olsen R."/>
            <person name="Szafranski K."/>
            <person name="Xu Q."/>
            <person name="Tunggal B."/>
            <person name="Kummerfeld S."/>
            <person name="Madera M."/>
            <person name="Konfortov B.A."/>
            <person name="Rivero F."/>
            <person name="Bankier A.T."/>
            <person name="Lehmann R."/>
            <person name="Hamlin N."/>
            <person name="Davies R."/>
            <person name="Gaudet P."/>
            <person name="Fey P."/>
            <person name="Pilcher K."/>
            <person name="Chen G."/>
            <person name="Saunders D."/>
            <person name="Sodergren E.J."/>
            <person name="Davis P."/>
            <person name="Kerhornou A."/>
            <person name="Nie X."/>
            <person name="Hall N."/>
            <person name="Anjard C."/>
            <person name="Hemphill L."/>
            <person name="Bason N."/>
            <person name="Farbrother P."/>
            <person name="Desany B."/>
            <person name="Just E."/>
            <person name="Morio T."/>
            <person name="Rost R."/>
            <person name="Churcher C.M."/>
            <person name="Cooper J."/>
            <person name="Haydock S."/>
            <person name="van Driessche N."/>
            <person name="Cronin A."/>
            <person name="Goodhead I."/>
            <person name="Muzny D.M."/>
            <person name="Mourier T."/>
            <person name="Pain A."/>
            <person name="Lu M."/>
            <person name="Harper D."/>
            <person name="Lindsay R."/>
            <person name="Hauser H."/>
            <person name="James K.D."/>
            <person name="Quiles M."/>
            <person name="Madan Babu M."/>
            <person name="Saito T."/>
            <person name="Buchrieser C."/>
            <person name="Wardroper A."/>
            <person name="Felder M."/>
            <person name="Thangavelu M."/>
            <person name="Johnson D."/>
            <person name="Knights A."/>
            <person name="Loulseged H."/>
            <person name="Mungall K.L."/>
            <person name="Oliver K."/>
            <person name="Price C."/>
            <person name="Quail M.A."/>
            <person name="Urushihara H."/>
            <person name="Hernandez J."/>
            <person name="Rabbinowitsch E."/>
            <person name="Steffen D."/>
            <person name="Sanders M."/>
            <person name="Ma J."/>
            <person name="Kohara Y."/>
            <person name="Sharp S."/>
            <person name="Simmonds M.N."/>
            <person name="Spiegler S."/>
            <person name="Tivey A."/>
            <person name="Sugano S."/>
            <person name="White B."/>
            <person name="Walker D."/>
            <person name="Woodward J.R."/>
            <person name="Winckler T."/>
            <person name="Tanaka Y."/>
            <person name="Shaulsky G."/>
            <person name="Schleicher M."/>
            <person name="Weinstock G.M."/>
            <person name="Rosenthal A."/>
            <person name="Cox E.C."/>
            <person name="Chisholm R.L."/>
            <person name="Gibbs R.A."/>
            <person name="Loomis W.F."/>
            <person name="Platzer M."/>
            <person name="Kay R.R."/>
            <person name="Williams J.G."/>
            <person name="Dear P.H."/>
            <person name="Noegel A.A."/>
            <person name="Barrell B.G."/>
            <person name="Kuspa A."/>
        </authorList>
    </citation>
    <scope>NUCLEOTIDE SEQUENCE [LARGE SCALE GENOMIC DNA]</scope>
    <source>
        <strain>AX4</strain>
    </source>
</reference>
<organism>
    <name type="scientific">Dictyostelium discoideum</name>
    <name type="common">Social amoeba</name>
    <dbReference type="NCBI Taxonomy" id="44689"/>
    <lineage>
        <taxon>Eukaryota</taxon>
        <taxon>Amoebozoa</taxon>
        <taxon>Evosea</taxon>
        <taxon>Eumycetozoa</taxon>
        <taxon>Dictyostelia</taxon>
        <taxon>Dictyosteliales</taxon>
        <taxon>Dictyosteliaceae</taxon>
        <taxon>Dictyostelium</taxon>
    </lineage>
</organism>
<accession>Q54PH8</accession>
<name>RS13_DICDI</name>
<sequence length="151" mass="16876">MGRMHSNGKGISGSSLPYNRKPHAWTKPTASEVCETVCKLAKRGYTPSKIGSSLRDSLGVAQVKNVTGSKILRILKVNGLAPTIPEDLYHLIKKAVTINKHLQRARKDYDGKFHLRLVESRIHRLTRPYRKNGTLAPNWKYESNNASTLVA</sequence>
<keyword id="KW-0963">Cytoplasm</keyword>
<keyword id="KW-0539">Nucleus</keyword>
<keyword id="KW-1185">Reference proteome</keyword>
<keyword id="KW-0687">Ribonucleoprotein</keyword>
<keyword id="KW-0689">Ribosomal protein</keyword>
<proteinExistence type="inferred from homology"/>
<dbReference type="EMBL" id="AAFI02000066">
    <property type="protein sequence ID" value="EAL65193.1"/>
    <property type="molecule type" value="Genomic_DNA"/>
</dbReference>
<dbReference type="RefSeq" id="XP_638554.1">
    <property type="nucleotide sequence ID" value="XM_633462.1"/>
</dbReference>
<dbReference type="SMR" id="Q54PH8"/>
<dbReference type="FunCoup" id="Q54PH8">
    <property type="interactions" value="643"/>
</dbReference>
<dbReference type="STRING" id="44689.Q54PH8"/>
<dbReference type="PaxDb" id="44689-DDB0230055"/>
<dbReference type="EnsemblProtists" id="EAL65193">
    <property type="protein sequence ID" value="EAL65193"/>
    <property type="gene ID" value="DDB_G0284533"/>
</dbReference>
<dbReference type="GeneID" id="8624647"/>
<dbReference type="KEGG" id="ddi:DDB_G0284533"/>
<dbReference type="dictyBase" id="DDB_G0284533">
    <property type="gene designation" value="rps13"/>
</dbReference>
<dbReference type="VEuPathDB" id="AmoebaDB:DDB_G0284533"/>
<dbReference type="eggNOG" id="KOG0400">
    <property type="taxonomic scope" value="Eukaryota"/>
</dbReference>
<dbReference type="HOGENOM" id="CLU_090139_2_0_1"/>
<dbReference type="InParanoid" id="Q54PH8"/>
<dbReference type="OMA" id="MHTRRKG"/>
<dbReference type="PhylomeDB" id="Q54PH8"/>
<dbReference type="Reactome" id="R-DDI-156827">
    <property type="pathway name" value="L13a-mediated translational silencing of Ceruloplasmin expression"/>
</dbReference>
<dbReference type="Reactome" id="R-DDI-1799339">
    <property type="pathway name" value="SRP-dependent cotranslational protein targeting to membrane"/>
</dbReference>
<dbReference type="Reactome" id="R-DDI-72689">
    <property type="pathway name" value="Formation of a pool of free 40S subunits"/>
</dbReference>
<dbReference type="Reactome" id="R-DDI-72695">
    <property type="pathway name" value="Formation of the ternary complex, and subsequently, the 43S complex"/>
</dbReference>
<dbReference type="Reactome" id="R-DDI-72702">
    <property type="pathway name" value="Ribosomal scanning and start codon recognition"/>
</dbReference>
<dbReference type="Reactome" id="R-DDI-72706">
    <property type="pathway name" value="GTP hydrolysis and joining of the 60S ribosomal subunit"/>
</dbReference>
<dbReference type="Reactome" id="R-DDI-975956">
    <property type="pathway name" value="Nonsense Mediated Decay (NMD) independent of the Exon Junction Complex (EJC)"/>
</dbReference>
<dbReference type="Reactome" id="R-DDI-975957">
    <property type="pathway name" value="Nonsense Mediated Decay (NMD) enhanced by the Exon Junction Complex (EJC)"/>
</dbReference>
<dbReference type="PRO" id="PR:Q54PH8"/>
<dbReference type="Proteomes" id="UP000002195">
    <property type="component" value="Chromosome 4"/>
</dbReference>
<dbReference type="GO" id="GO:0022627">
    <property type="term" value="C:cytosolic small ribosomal subunit"/>
    <property type="evidence" value="ECO:0000318"/>
    <property type="project" value="GO_Central"/>
</dbReference>
<dbReference type="GO" id="GO:0005730">
    <property type="term" value="C:nucleolus"/>
    <property type="evidence" value="ECO:0000318"/>
    <property type="project" value="GO_Central"/>
</dbReference>
<dbReference type="GO" id="GO:0032040">
    <property type="term" value="C:small-subunit processome"/>
    <property type="evidence" value="ECO:0000250"/>
    <property type="project" value="UniProtKB"/>
</dbReference>
<dbReference type="GO" id="GO:0070181">
    <property type="term" value="F:small ribosomal subunit rRNA binding"/>
    <property type="evidence" value="ECO:0000318"/>
    <property type="project" value="GO_Central"/>
</dbReference>
<dbReference type="GO" id="GO:0003735">
    <property type="term" value="F:structural constituent of ribosome"/>
    <property type="evidence" value="ECO:0000318"/>
    <property type="project" value="GO_Central"/>
</dbReference>
<dbReference type="GO" id="GO:0042274">
    <property type="term" value="P:ribosomal small subunit biogenesis"/>
    <property type="evidence" value="ECO:0000250"/>
    <property type="project" value="UniProtKB"/>
</dbReference>
<dbReference type="GO" id="GO:0006412">
    <property type="term" value="P:translation"/>
    <property type="evidence" value="ECO:0007669"/>
    <property type="project" value="InterPro"/>
</dbReference>
<dbReference type="CDD" id="cd00353">
    <property type="entry name" value="Ribosomal_S15p_S13e"/>
    <property type="match status" value="1"/>
</dbReference>
<dbReference type="FunFam" id="1.10.287.10:FF:000003">
    <property type="entry name" value="40S ribosomal protein S13"/>
    <property type="match status" value="1"/>
</dbReference>
<dbReference type="FunFam" id="4.10.860.130:FF:000001">
    <property type="entry name" value="40S ribosomal protein S13"/>
    <property type="match status" value="1"/>
</dbReference>
<dbReference type="Gene3D" id="4.10.860.130">
    <property type="match status" value="1"/>
</dbReference>
<dbReference type="Gene3D" id="1.10.287.10">
    <property type="entry name" value="S15/NS1, RNA-binding"/>
    <property type="match status" value="1"/>
</dbReference>
<dbReference type="HAMAP" id="MF_01343_A">
    <property type="entry name" value="Ribosomal_uS15_A"/>
    <property type="match status" value="1"/>
</dbReference>
<dbReference type="InterPro" id="IPR000589">
    <property type="entry name" value="Ribosomal_uS15"/>
</dbReference>
<dbReference type="InterPro" id="IPR023029">
    <property type="entry name" value="Ribosomal_uS15_arc_euk"/>
</dbReference>
<dbReference type="InterPro" id="IPR012606">
    <property type="entry name" value="Ribosomal_uS15_N"/>
</dbReference>
<dbReference type="InterPro" id="IPR009068">
    <property type="entry name" value="uS15_NS1_RNA-bd_sf"/>
</dbReference>
<dbReference type="NCBIfam" id="NF006331">
    <property type="entry name" value="PRK08561.1"/>
    <property type="match status" value="1"/>
</dbReference>
<dbReference type="PANTHER" id="PTHR11885">
    <property type="entry name" value="RIBOSOMAL PROTEIN S15P/S13E"/>
    <property type="match status" value="1"/>
</dbReference>
<dbReference type="PANTHER" id="PTHR11885:SF6">
    <property type="entry name" value="SMALL RIBOSOMAL SUBUNIT PROTEIN US15"/>
    <property type="match status" value="1"/>
</dbReference>
<dbReference type="Pfam" id="PF08069">
    <property type="entry name" value="Ribosomal_S13_N"/>
    <property type="match status" value="1"/>
</dbReference>
<dbReference type="Pfam" id="PF00312">
    <property type="entry name" value="Ribosomal_S15"/>
    <property type="match status" value="1"/>
</dbReference>
<dbReference type="SMART" id="SM01386">
    <property type="entry name" value="Ribosomal_S13_N"/>
    <property type="match status" value="1"/>
</dbReference>
<dbReference type="SMART" id="SM01387">
    <property type="entry name" value="Ribosomal_S15"/>
    <property type="match status" value="1"/>
</dbReference>
<dbReference type="SUPFAM" id="SSF47060">
    <property type="entry name" value="S15/NS1 RNA-binding domain"/>
    <property type="match status" value="1"/>
</dbReference>
<comment type="function">
    <text evidence="2">Component of the small ribosomal subunit. The ribosome is a large ribonucleoprotein complex responsible for the synthesis of proteins in the cell. Part of the small subunit (SSU) processome, first precursor of the small eukaryotic ribosomal subunit. During the assembly of the SSU processome in the nucleolus, many ribosome biogenesis factors, an RNA chaperone and ribosomal proteins associate with the nascent pre-rRNA and work in concert to generate RNA folding, modifications, rearrangements and cleavage as well as targeted degradation of pre-ribosomal RNA by the RNA exosome.</text>
</comment>
<comment type="subunit">
    <text evidence="2">Component of the small ribosomal subunit. Part of the small subunit (SSU) processome, composed of more than 70 proteins and the RNA chaperone small nucleolar RNA (snoRNA) U3.</text>
</comment>
<comment type="subcellular location">
    <subcellularLocation>
        <location evidence="2">Cytoplasm</location>
    </subcellularLocation>
    <subcellularLocation>
        <location evidence="2">Nucleus</location>
        <location evidence="2">Nucleolus</location>
    </subcellularLocation>
</comment>
<comment type="similarity">
    <text evidence="4">Belongs to the universal ribosomal protein uS15 family.</text>
</comment>